<name>SECA_TERTT</name>
<reference key="1">
    <citation type="journal article" date="2009" name="PLoS ONE">
        <title>The complete genome of Teredinibacter turnerae T7901: an intracellular endosymbiont of marine wood-boring bivalves (shipworms).</title>
        <authorList>
            <person name="Yang J.C."/>
            <person name="Madupu R."/>
            <person name="Durkin A.S."/>
            <person name="Ekborg N.A."/>
            <person name="Pedamallu C.S."/>
            <person name="Hostetler J.B."/>
            <person name="Radune D."/>
            <person name="Toms B.S."/>
            <person name="Henrissat B."/>
            <person name="Coutinho P.M."/>
            <person name="Schwarz S."/>
            <person name="Field L."/>
            <person name="Trindade-Silva A.E."/>
            <person name="Soares C.A.G."/>
            <person name="Elshahawi S."/>
            <person name="Hanora A."/>
            <person name="Schmidt E.W."/>
            <person name="Haygood M.G."/>
            <person name="Posfai J."/>
            <person name="Benner J."/>
            <person name="Madinger C."/>
            <person name="Nove J."/>
            <person name="Anton B."/>
            <person name="Chaudhary K."/>
            <person name="Foster J."/>
            <person name="Holman A."/>
            <person name="Kumar S."/>
            <person name="Lessard P.A."/>
            <person name="Luyten Y.A."/>
            <person name="Slatko B."/>
            <person name="Wood N."/>
            <person name="Wu B."/>
            <person name="Teplitski M."/>
            <person name="Mougous J.D."/>
            <person name="Ward N."/>
            <person name="Eisen J.A."/>
            <person name="Badger J.H."/>
            <person name="Distel D.L."/>
        </authorList>
    </citation>
    <scope>NUCLEOTIDE SEQUENCE [LARGE SCALE GENOMIC DNA]</scope>
    <source>
        <strain>ATCC 39867 / T7901</strain>
    </source>
</reference>
<comment type="function">
    <text evidence="1">Part of the Sec protein translocase complex. Interacts with the SecYEG preprotein conducting channel. Has a central role in coupling the hydrolysis of ATP to the transfer of proteins into and across the cell membrane, serving both as a receptor for the preprotein-SecB complex and as an ATP-driven molecular motor driving the stepwise translocation of polypeptide chains across the membrane.</text>
</comment>
<comment type="catalytic activity">
    <reaction evidence="1">
        <text>ATP + H2O + cellular proteinSide 1 = ADP + phosphate + cellular proteinSide 2.</text>
        <dbReference type="EC" id="7.4.2.8"/>
    </reaction>
</comment>
<comment type="cofactor">
    <cofactor evidence="1">
        <name>Zn(2+)</name>
        <dbReference type="ChEBI" id="CHEBI:29105"/>
    </cofactor>
    <text evidence="1">May bind 1 zinc ion per subunit.</text>
</comment>
<comment type="subunit">
    <text evidence="1">Monomer and homodimer. Part of the essential Sec protein translocation apparatus which comprises SecA, SecYEG and auxiliary proteins SecDF-YajC and YidC.</text>
</comment>
<comment type="subcellular location">
    <subcellularLocation>
        <location evidence="1">Cell inner membrane</location>
        <topology evidence="1">Peripheral membrane protein</topology>
        <orientation evidence="1">Cytoplasmic side</orientation>
    </subcellularLocation>
    <subcellularLocation>
        <location evidence="1">Cytoplasm</location>
    </subcellularLocation>
    <text evidence="1">Distribution is 50-50.</text>
</comment>
<comment type="similarity">
    <text evidence="1">Belongs to the SecA family.</text>
</comment>
<protein>
    <recommendedName>
        <fullName evidence="1">Protein translocase subunit SecA</fullName>
        <ecNumber evidence="1">7.4.2.8</ecNumber>
    </recommendedName>
</protein>
<dbReference type="EC" id="7.4.2.8" evidence="1"/>
<dbReference type="EMBL" id="CP001614">
    <property type="protein sequence ID" value="ACR11998.1"/>
    <property type="molecule type" value="Genomic_DNA"/>
</dbReference>
<dbReference type="RefSeq" id="WP_015818110.1">
    <property type="nucleotide sequence ID" value="NC_012997.1"/>
</dbReference>
<dbReference type="SMR" id="C5BP26"/>
<dbReference type="STRING" id="377629.TERTU_3041"/>
<dbReference type="KEGG" id="ttu:TERTU_3041"/>
<dbReference type="eggNOG" id="COG0653">
    <property type="taxonomic scope" value="Bacteria"/>
</dbReference>
<dbReference type="HOGENOM" id="CLU_005314_3_0_6"/>
<dbReference type="OrthoDB" id="9805579at2"/>
<dbReference type="Proteomes" id="UP000009080">
    <property type="component" value="Chromosome"/>
</dbReference>
<dbReference type="GO" id="GO:0031522">
    <property type="term" value="C:cell envelope Sec protein transport complex"/>
    <property type="evidence" value="ECO:0007669"/>
    <property type="project" value="TreeGrafter"/>
</dbReference>
<dbReference type="GO" id="GO:0005829">
    <property type="term" value="C:cytosol"/>
    <property type="evidence" value="ECO:0007669"/>
    <property type="project" value="TreeGrafter"/>
</dbReference>
<dbReference type="GO" id="GO:0005886">
    <property type="term" value="C:plasma membrane"/>
    <property type="evidence" value="ECO:0007669"/>
    <property type="project" value="UniProtKB-SubCell"/>
</dbReference>
<dbReference type="GO" id="GO:0005524">
    <property type="term" value="F:ATP binding"/>
    <property type="evidence" value="ECO:0007669"/>
    <property type="project" value="UniProtKB-UniRule"/>
</dbReference>
<dbReference type="GO" id="GO:0046872">
    <property type="term" value="F:metal ion binding"/>
    <property type="evidence" value="ECO:0007669"/>
    <property type="project" value="UniProtKB-KW"/>
</dbReference>
<dbReference type="GO" id="GO:0008564">
    <property type="term" value="F:protein-exporting ATPase activity"/>
    <property type="evidence" value="ECO:0007669"/>
    <property type="project" value="UniProtKB-EC"/>
</dbReference>
<dbReference type="GO" id="GO:0065002">
    <property type="term" value="P:intracellular protein transmembrane transport"/>
    <property type="evidence" value="ECO:0007669"/>
    <property type="project" value="UniProtKB-UniRule"/>
</dbReference>
<dbReference type="GO" id="GO:0017038">
    <property type="term" value="P:protein import"/>
    <property type="evidence" value="ECO:0007669"/>
    <property type="project" value="InterPro"/>
</dbReference>
<dbReference type="GO" id="GO:0006605">
    <property type="term" value="P:protein targeting"/>
    <property type="evidence" value="ECO:0007669"/>
    <property type="project" value="UniProtKB-UniRule"/>
</dbReference>
<dbReference type="GO" id="GO:0043952">
    <property type="term" value="P:protein transport by the Sec complex"/>
    <property type="evidence" value="ECO:0007669"/>
    <property type="project" value="TreeGrafter"/>
</dbReference>
<dbReference type="CDD" id="cd17928">
    <property type="entry name" value="DEXDc_SecA"/>
    <property type="match status" value="1"/>
</dbReference>
<dbReference type="CDD" id="cd18803">
    <property type="entry name" value="SF2_C_secA"/>
    <property type="match status" value="1"/>
</dbReference>
<dbReference type="FunFam" id="3.40.50.300:FF:000113">
    <property type="entry name" value="Preprotein translocase subunit SecA"/>
    <property type="match status" value="1"/>
</dbReference>
<dbReference type="FunFam" id="3.90.1440.10:FF:000001">
    <property type="entry name" value="Preprotein translocase subunit SecA"/>
    <property type="match status" value="1"/>
</dbReference>
<dbReference type="FunFam" id="1.10.3060.10:FF:000003">
    <property type="entry name" value="Protein translocase subunit SecA"/>
    <property type="match status" value="1"/>
</dbReference>
<dbReference type="Gene3D" id="1.10.3060.10">
    <property type="entry name" value="Helical scaffold and wing domains of SecA"/>
    <property type="match status" value="1"/>
</dbReference>
<dbReference type="Gene3D" id="3.40.50.300">
    <property type="entry name" value="P-loop containing nucleotide triphosphate hydrolases"/>
    <property type="match status" value="2"/>
</dbReference>
<dbReference type="Gene3D" id="3.90.1440.10">
    <property type="entry name" value="SecA, preprotein cross-linking domain"/>
    <property type="match status" value="1"/>
</dbReference>
<dbReference type="HAMAP" id="MF_01382">
    <property type="entry name" value="SecA"/>
    <property type="match status" value="1"/>
</dbReference>
<dbReference type="InterPro" id="IPR014001">
    <property type="entry name" value="Helicase_ATP-bd"/>
</dbReference>
<dbReference type="InterPro" id="IPR001650">
    <property type="entry name" value="Helicase_C-like"/>
</dbReference>
<dbReference type="InterPro" id="IPR027417">
    <property type="entry name" value="P-loop_NTPase"/>
</dbReference>
<dbReference type="InterPro" id="IPR004027">
    <property type="entry name" value="SEC_C_motif"/>
</dbReference>
<dbReference type="InterPro" id="IPR000185">
    <property type="entry name" value="SecA"/>
</dbReference>
<dbReference type="InterPro" id="IPR020937">
    <property type="entry name" value="SecA_CS"/>
</dbReference>
<dbReference type="InterPro" id="IPR011115">
    <property type="entry name" value="SecA_DEAD"/>
</dbReference>
<dbReference type="InterPro" id="IPR014018">
    <property type="entry name" value="SecA_motor_DEAD"/>
</dbReference>
<dbReference type="InterPro" id="IPR011130">
    <property type="entry name" value="SecA_preprotein_X-link_dom"/>
</dbReference>
<dbReference type="InterPro" id="IPR044722">
    <property type="entry name" value="SecA_SF2_C"/>
</dbReference>
<dbReference type="InterPro" id="IPR011116">
    <property type="entry name" value="SecA_Wing/Scaffold"/>
</dbReference>
<dbReference type="InterPro" id="IPR036266">
    <property type="entry name" value="SecA_Wing/Scaffold_sf"/>
</dbReference>
<dbReference type="InterPro" id="IPR036670">
    <property type="entry name" value="SecA_X-link_sf"/>
</dbReference>
<dbReference type="NCBIfam" id="NF009538">
    <property type="entry name" value="PRK12904.1"/>
    <property type="match status" value="1"/>
</dbReference>
<dbReference type="NCBIfam" id="TIGR00963">
    <property type="entry name" value="secA"/>
    <property type="match status" value="1"/>
</dbReference>
<dbReference type="PANTHER" id="PTHR30612:SF0">
    <property type="entry name" value="CHLOROPLAST PROTEIN-TRANSPORTING ATPASE"/>
    <property type="match status" value="1"/>
</dbReference>
<dbReference type="PANTHER" id="PTHR30612">
    <property type="entry name" value="SECA INNER MEMBRANE COMPONENT OF SEC PROTEIN SECRETION SYSTEM"/>
    <property type="match status" value="1"/>
</dbReference>
<dbReference type="Pfam" id="PF21090">
    <property type="entry name" value="P-loop_SecA"/>
    <property type="match status" value="1"/>
</dbReference>
<dbReference type="Pfam" id="PF02810">
    <property type="entry name" value="SEC-C"/>
    <property type="match status" value="1"/>
</dbReference>
<dbReference type="Pfam" id="PF07517">
    <property type="entry name" value="SecA_DEAD"/>
    <property type="match status" value="1"/>
</dbReference>
<dbReference type="Pfam" id="PF01043">
    <property type="entry name" value="SecA_PP_bind"/>
    <property type="match status" value="1"/>
</dbReference>
<dbReference type="Pfam" id="PF07516">
    <property type="entry name" value="SecA_SW"/>
    <property type="match status" value="1"/>
</dbReference>
<dbReference type="PRINTS" id="PR00906">
    <property type="entry name" value="SECA"/>
</dbReference>
<dbReference type="SMART" id="SM00957">
    <property type="entry name" value="SecA_DEAD"/>
    <property type="match status" value="1"/>
</dbReference>
<dbReference type="SMART" id="SM00958">
    <property type="entry name" value="SecA_PP_bind"/>
    <property type="match status" value="1"/>
</dbReference>
<dbReference type="SUPFAM" id="SSF81886">
    <property type="entry name" value="Helical scaffold and wing domains of SecA"/>
    <property type="match status" value="1"/>
</dbReference>
<dbReference type="SUPFAM" id="SSF52540">
    <property type="entry name" value="P-loop containing nucleoside triphosphate hydrolases"/>
    <property type="match status" value="2"/>
</dbReference>
<dbReference type="SUPFAM" id="SSF81767">
    <property type="entry name" value="Pre-protein crosslinking domain of SecA"/>
    <property type="match status" value="1"/>
</dbReference>
<dbReference type="PROSITE" id="PS01312">
    <property type="entry name" value="SECA"/>
    <property type="match status" value="1"/>
</dbReference>
<dbReference type="PROSITE" id="PS51196">
    <property type="entry name" value="SECA_MOTOR_DEAD"/>
    <property type="match status" value="1"/>
</dbReference>
<evidence type="ECO:0000255" key="1">
    <source>
        <dbReference type="HAMAP-Rule" id="MF_01382"/>
    </source>
</evidence>
<evidence type="ECO:0000256" key="2">
    <source>
        <dbReference type="SAM" id="MobiDB-lite"/>
    </source>
</evidence>
<gene>
    <name evidence="1" type="primary">secA</name>
    <name type="ordered locus">TERTU_3041</name>
</gene>
<feature type="chain" id="PRO_1000215120" description="Protein translocase subunit SecA">
    <location>
        <begin position="1"/>
        <end position="911"/>
    </location>
</feature>
<feature type="region of interest" description="Disordered" evidence="2">
    <location>
        <begin position="853"/>
        <end position="911"/>
    </location>
</feature>
<feature type="compositionally biased region" description="Low complexity" evidence="2">
    <location>
        <begin position="862"/>
        <end position="875"/>
    </location>
</feature>
<feature type="compositionally biased region" description="Basic residues" evidence="2">
    <location>
        <begin position="901"/>
        <end position="911"/>
    </location>
</feature>
<feature type="binding site" evidence="1">
    <location>
        <position position="87"/>
    </location>
    <ligand>
        <name>ATP</name>
        <dbReference type="ChEBI" id="CHEBI:30616"/>
    </ligand>
</feature>
<feature type="binding site" evidence="1">
    <location>
        <begin position="105"/>
        <end position="109"/>
    </location>
    <ligand>
        <name>ATP</name>
        <dbReference type="ChEBI" id="CHEBI:30616"/>
    </ligand>
</feature>
<feature type="binding site" evidence="1">
    <location>
        <position position="513"/>
    </location>
    <ligand>
        <name>ATP</name>
        <dbReference type="ChEBI" id="CHEBI:30616"/>
    </ligand>
</feature>
<feature type="binding site" evidence="1">
    <location>
        <position position="895"/>
    </location>
    <ligand>
        <name>Zn(2+)</name>
        <dbReference type="ChEBI" id="CHEBI:29105"/>
    </ligand>
</feature>
<feature type="binding site" evidence="1">
    <location>
        <position position="897"/>
    </location>
    <ligand>
        <name>Zn(2+)</name>
        <dbReference type="ChEBI" id="CHEBI:29105"/>
    </ligand>
</feature>
<feature type="binding site" evidence="1">
    <location>
        <position position="906"/>
    </location>
    <ligand>
        <name>Zn(2+)</name>
        <dbReference type="ChEBI" id="CHEBI:29105"/>
    </ligand>
</feature>
<feature type="binding site" evidence="1">
    <location>
        <position position="907"/>
    </location>
    <ligand>
        <name>Zn(2+)</name>
        <dbReference type="ChEBI" id="CHEBI:29105"/>
    </ligand>
</feature>
<organism>
    <name type="scientific">Teredinibacter turnerae (strain ATCC 39867 / T7901)</name>
    <dbReference type="NCBI Taxonomy" id="377629"/>
    <lineage>
        <taxon>Bacteria</taxon>
        <taxon>Pseudomonadati</taxon>
        <taxon>Pseudomonadota</taxon>
        <taxon>Gammaproteobacteria</taxon>
        <taxon>Cellvibrionales</taxon>
        <taxon>Cellvibrionaceae</taxon>
        <taxon>Teredinibacter</taxon>
    </lineage>
</organism>
<accession>C5BP26</accession>
<sequence>MIGKLFRAVFGSKNDRELKRMGKLVRKINALEPEFEPLDDTQLKAKTAEFRERFNNGESLDQLLPEAFAAAREASKRAMGMRHFDVQLIGGITLHEGRIAEMKTGEGKTLVATLAAYLNGIPGKGVHIVTVNDYLARRDANWMRPVYEALGMTVGSIVSMQDPAEKREAYAADITYGTNNEYGFDYLRDNMALRKEDRMQRPLAYAVVDEVDSILIDEARTPLIISGAAEDSSVLYQAINKLIPSLKRQPEAPEGEEPTELGHFTIDEKMRSIELTEDGHQLVEELLIKNGLLGENDSLYHASNLSLLHHILSGLRAHHLYHKNVEYIVQNGQVVLIDEHTGRTMPGRRLSEGLHQAIEAKEGVAIQAESQTMASTTFQNYFRIYDKLAGMTGTADTEAFEFRQIYGLDVVVIPTNRPVARKDLNDLIFLSVEDKYDAIIEDVNEFRGKNAPVLVGTASVETSEEMSKRLTEAGIAHEVLNAKQHEREADIIAQAGRPGAVTIATNMAGRGTDIVLGGKWQAEIDKLENPTEEQIAAIKEDWKKRHEIVLEAGGLHIIGTERHESRRIDNQLRGRAGRQGDPGLSRFYLSLEDNLMRIFASDRMRAIMQTLGMEKGEAIEHRMVTNAIEKAQRKVEGRNFDYRKQLLEYDDVANDQRRVVYAQRNELLEADDIEEAIHGIREDVIAAQLESFVPPQSVEEQWDIKGLEQTLLNDYGVSVPLQQWLDEDSKMDEEGLRTKLTEVMDEIYARKCEAIGSAMRTLEKQLMLQVLDTLWKEHLQNMDALRQGINLRAYAQRNPKQEYKRESFTLFEEMLQNLKFDLTRVLFRVQPISEEQLAEMERRRQAEAAARKIQLQHEQVSGLEPEAGEAPSAGEPRSEQPYVRAGRKVGRNDPCPCGSGKKFKACHGKLG</sequence>
<keyword id="KW-0067">ATP-binding</keyword>
<keyword id="KW-0997">Cell inner membrane</keyword>
<keyword id="KW-1003">Cell membrane</keyword>
<keyword id="KW-0963">Cytoplasm</keyword>
<keyword id="KW-0472">Membrane</keyword>
<keyword id="KW-0479">Metal-binding</keyword>
<keyword id="KW-0547">Nucleotide-binding</keyword>
<keyword id="KW-0653">Protein transport</keyword>
<keyword id="KW-1185">Reference proteome</keyword>
<keyword id="KW-1278">Translocase</keyword>
<keyword id="KW-0811">Translocation</keyword>
<keyword id="KW-0813">Transport</keyword>
<keyword id="KW-0862">Zinc</keyword>
<proteinExistence type="inferred from homology"/>